<protein>
    <recommendedName>
        <fullName evidence="1">Small ribosomal subunit protein bS6</fullName>
    </recommendedName>
    <alternativeName>
        <fullName evidence="3">30S ribosomal protein S6</fullName>
    </alternativeName>
</protein>
<reference key="1">
    <citation type="submission" date="2008-04" db="EMBL/GenBank/DDBJ databases">
        <title>Complete sequence of Yersinia pseudotuberculosis PB1/+.</title>
        <authorList>
            <person name="Copeland A."/>
            <person name="Lucas S."/>
            <person name="Lapidus A."/>
            <person name="Glavina del Rio T."/>
            <person name="Dalin E."/>
            <person name="Tice H."/>
            <person name="Bruce D."/>
            <person name="Goodwin L."/>
            <person name="Pitluck S."/>
            <person name="Munk A.C."/>
            <person name="Brettin T."/>
            <person name="Detter J.C."/>
            <person name="Han C."/>
            <person name="Tapia R."/>
            <person name="Schmutz J."/>
            <person name="Larimer F."/>
            <person name="Land M."/>
            <person name="Hauser L."/>
            <person name="Challacombe J.F."/>
            <person name="Green L."/>
            <person name="Lindler L.E."/>
            <person name="Nikolich M.P."/>
            <person name="Richardson P."/>
        </authorList>
    </citation>
    <scope>NUCLEOTIDE SEQUENCE [LARGE SCALE GENOMIC DNA]</scope>
    <source>
        <strain>PB1/+</strain>
    </source>
</reference>
<sequence length="130" mass="15008">MRHYEIVFMVHPDQSEQVPGMIERYSATITNAAGTIHRLEDWGRRQLAYPINKLHKAHYVLLNVEAPQEAIDELETNFRFNDAVIRSMVMRVKHAVTEASPMVKAKDERRERHDFASEANDDSEAGDSEE</sequence>
<dbReference type="EMBL" id="CP001048">
    <property type="protein sequence ID" value="ACC87454.1"/>
    <property type="molecule type" value="Genomic_DNA"/>
</dbReference>
<dbReference type="RefSeq" id="WP_002210153.1">
    <property type="nucleotide sequence ID" value="NZ_CP009780.1"/>
</dbReference>
<dbReference type="SMR" id="B2K2L3"/>
<dbReference type="GeneID" id="97457911"/>
<dbReference type="KEGG" id="ypb:YPTS_0468"/>
<dbReference type="PATRIC" id="fig|502801.10.peg.4141"/>
<dbReference type="GO" id="GO:0022627">
    <property type="term" value="C:cytosolic small ribosomal subunit"/>
    <property type="evidence" value="ECO:0007669"/>
    <property type="project" value="TreeGrafter"/>
</dbReference>
<dbReference type="GO" id="GO:0070181">
    <property type="term" value="F:small ribosomal subunit rRNA binding"/>
    <property type="evidence" value="ECO:0007669"/>
    <property type="project" value="TreeGrafter"/>
</dbReference>
<dbReference type="GO" id="GO:0003735">
    <property type="term" value="F:structural constituent of ribosome"/>
    <property type="evidence" value="ECO:0007669"/>
    <property type="project" value="InterPro"/>
</dbReference>
<dbReference type="GO" id="GO:0006412">
    <property type="term" value="P:translation"/>
    <property type="evidence" value="ECO:0007669"/>
    <property type="project" value="UniProtKB-UniRule"/>
</dbReference>
<dbReference type="CDD" id="cd00473">
    <property type="entry name" value="bS6"/>
    <property type="match status" value="1"/>
</dbReference>
<dbReference type="FunFam" id="3.30.70.60:FF:000003">
    <property type="entry name" value="30S ribosomal protein S6"/>
    <property type="match status" value="1"/>
</dbReference>
<dbReference type="Gene3D" id="3.30.70.60">
    <property type="match status" value="1"/>
</dbReference>
<dbReference type="HAMAP" id="MF_00360">
    <property type="entry name" value="Ribosomal_bS6"/>
    <property type="match status" value="1"/>
</dbReference>
<dbReference type="InterPro" id="IPR000529">
    <property type="entry name" value="Ribosomal_bS6"/>
</dbReference>
<dbReference type="InterPro" id="IPR020815">
    <property type="entry name" value="Ribosomal_bS6_CS"/>
</dbReference>
<dbReference type="InterPro" id="IPR035980">
    <property type="entry name" value="Ribosomal_bS6_sf"/>
</dbReference>
<dbReference type="InterPro" id="IPR020814">
    <property type="entry name" value="Ribosomal_S6_plastid/chlpt"/>
</dbReference>
<dbReference type="InterPro" id="IPR014717">
    <property type="entry name" value="Transl_elong_EF1B/ribsomal_bS6"/>
</dbReference>
<dbReference type="NCBIfam" id="TIGR00166">
    <property type="entry name" value="S6"/>
    <property type="match status" value="1"/>
</dbReference>
<dbReference type="PANTHER" id="PTHR21011">
    <property type="entry name" value="MITOCHONDRIAL 28S RIBOSOMAL PROTEIN S6"/>
    <property type="match status" value="1"/>
</dbReference>
<dbReference type="PANTHER" id="PTHR21011:SF1">
    <property type="entry name" value="SMALL RIBOSOMAL SUBUNIT PROTEIN BS6M"/>
    <property type="match status" value="1"/>
</dbReference>
<dbReference type="Pfam" id="PF01250">
    <property type="entry name" value="Ribosomal_S6"/>
    <property type="match status" value="1"/>
</dbReference>
<dbReference type="SUPFAM" id="SSF54995">
    <property type="entry name" value="Ribosomal protein S6"/>
    <property type="match status" value="1"/>
</dbReference>
<dbReference type="PROSITE" id="PS01048">
    <property type="entry name" value="RIBOSOMAL_S6"/>
    <property type="match status" value="1"/>
</dbReference>
<evidence type="ECO:0000255" key="1">
    <source>
        <dbReference type="HAMAP-Rule" id="MF_00360"/>
    </source>
</evidence>
<evidence type="ECO:0000256" key="2">
    <source>
        <dbReference type="SAM" id="MobiDB-lite"/>
    </source>
</evidence>
<evidence type="ECO:0000305" key="3"/>
<gene>
    <name evidence="1" type="primary">rpsF</name>
    <name type="ordered locus">YPTS_0468</name>
</gene>
<proteinExistence type="inferred from homology"/>
<keyword id="KW-0687">Ribonucleoprotein</keyword>
<keyword id="KW-0689">Ribosomal protein</keyword>
<keyword id="KW-0694">RNA-binding</keyword>
<keyword id="KW-0699">rRNA-binding</keyword>
<comment type="function">
    <text evidence="1">Binds together with bS18 to 16S ribosomal RNA.</text>
</comment>
<comment type="similarity">
    <text evidence="1">Belongs to the bacterial ribosomal protein bS6 family.</text>
</comment>
<feature type="chain" id="PRO_1000120827" description="Small ribosomal subunit protein bS6">
    <location>
        <begin position="1"/>
        <end position="130"/>
    </location>
</feature>
<feature type="region of interest" description="Disordered" evidence="2">
    <location>
        <begin position="99"/>
        <end position="130"/>
    </location>
</feature>
<feature type="compositionally biased region" description="Basic and acidic residues" evidence="2">
    <location>
        <begin position="104"/>
        <end position="116"/>
    </location>
</feature>
<feature type="compositionally biased region" description="Acidic residues" evidence="2">
    <location>
        <begin position="119"/>
        <end position="130"/>
    </location>
</feature>
<accession>B2K2L3</accession>
<name>RS6_YERPB</name>
<organism>
    <name type="scientific">Yersinia pseudotuberculosis serotype IB (strain PB1/+)</name>
    <dbReference type="NCBI Taxonomy" id="502801"/>
    <lineage>
        <taxon>Bacteria</taxon>
        <taxon>Pseudomonadati</taxon>
        <taxon>Pseudomonadota</taxon>
        <taxon>Gammaproteobacteria</taxon>
        <taxon>Enterobacterales</taxon>
        <taxon>Yersiniaceae</taxon>
        <taxon>Yersinia</taxon>
    </lineage>
</organism>